<name>XYLA_SALPB</name>
<feature type="chain" id="PRO_1000081033" description="Xylose isomerase">
    <location>
        <begin position="1"/>
        <end position="440"/>
    </location>
</feature>
<feature type="active site" evidence="1">
    <location>
        <position position="101"/>
    </location>
</feature>
<feature type="active site" evidence="1">
    <location>
        <position position="104"/>
    </location>
</feature>
<feature type="binding site" evidence="1">
    <location>
        <position position="232"/>
    </location>
    <ligand>
        <name>Mg(2+)</name>
        <dbReference type="ChEBI" id="CHEBI:18420"/>
        <label>1</label>
    </ligand>
</feature>
<feature type="binding site" evidence="1">
    <location>
        <position position="268"/>
    </location>
    <ligand>
        <name>Mg(2+)</name>
        <dbReference type="ChEBI" id="CHEBI:18420"/>
        <label>1</label>
    </ligand>
</feature>
<feature type="binding site" evidence="1">
    <location>
        <position position="268"/>
    </location>
    <ligand>
        <name>Mg(2+)</name>
        <dbReference type="ChEBI" id="CHEBI:18420"/>
        <label>2</label>
    </ligand>
</feature>
<feature type="binding site" evidence="1">
    <location>
        <position position="271"/>
    </location>
    <ligand>
        <name>Mg(2+)</name>
        <dbReference type="ChEBI" id="CHEBI:18420"/>
        <label>2</label>
    </ligand>
</feature>
<feature type="binding site" evidence="1">
    <location>
        <position position="296"/>
    </location>
    <ligand>
        <name>Mg(2+)</name>
        <dbReference type="ChEBI" id="CHEBI:18420"/>
        <label>1</label>
    </ligand>
</feature>
<feature type="binding site" evidence="1">
    <location>
        <position position="307"/>
    </location>
    <ligand>
        <name>Mg(2+)</name>
        <dbReference type="ChEBI" id="CHEBI:18420"/>
        <label>2</label>
    </ligand>
</feature>
<feature type="binding site" evidence="1">
    <location>
        <position position="309"/>
    </location>
    <ligand>
        <name>Mg(2+)</name>
        <dbReference type="ChEBI" id="CHEBI:18420"/>
        <label>2</label>
    </ligand>
</feature>
<feature type="binding site" evidence="1">
    <location>
        <position position="339"/>
    </location>
    <ligand>
        <name>Mg(2+)</name>
        <dbReference type="ChEBI" id="CHEBI:18420"/>
        <label>1</label>
    </ligand>
</feature>
<protein>
    <recommendedName>
        <fullName evidence="1">Xylose isomerase</fullName>
        <ecNumber evidence="1">5.3.1.5</ecNumber>
    </recommendedName>
</protein>
<reference key="1">
    <citation type="submission" date="2007-11" db="EMBL/GenBank/DDBJ databases">
        <authorList>
            <consortium name="The Salmonella enterica serovar Paratyphi B Genome Sequencing Project"/>
            <person name="McClelland M."/>
            <person name="Sanderson E.K."/>
            <person name="Porwollik S."/>
            <person name="Spieth J."/>
            <person name="Clifton W.S."/>
            <person name="Fulton R."/>
            <person name="Cordes M."/>
            <person name="Wollam A."/>
            <person name="Shah N."/>
            <person name="Pepin K."/>
            <person name="Bhonagiri V."/>
            <person name="Nash W."/>
            <person name="Johnson M."/>
            <person name="Thiruvilangam P."/>
            <person name="Wilson R."/>
        </authorList>
    </citation>
    <scope>NUCLEOTIDE SEQUENCE [LARGE SCALE GENOMIC DNA]</scope>
    <source>
        <strain>ATCC BAA-1250 / SPB7</strain>
    </source>
</reference>
<comment type="catalytic activity">
    <reaction evidence="1">
        <text>alpha-D-xylose = alpha-D-xylulofuranose</text>
        <dbReference type="Rhea" id="RHEA:22816"/>
        <dbReference type="ChEBI" id="CHEBI:28518"/>
        <dbReference type="ChEBI" id="CHEBI:188998"/>
        <dbReference type="EC" id="5.3.1.5"/>
    </reaction>
</comment>
<comment type="cofactor">
    <cofactor evidence="1">
        <name>Mg(2+)</name>
        <dbReference type="ChEBI" id="CHEBI:18420"/>
    </cofactor>
    <text evidence="1">Binds 2 magnesium ions per subunit.</text>
</comment>
<comment type="subunit">
    <text evidence="1">Homotetramer.</text>
</comment>
<comment type="subcellular location">
    <subcellularLocation>
        <location evidence="1">Cytoplasm</location>
    </subcellularLocation>
</comment>
<comment type="similarity">
    <text evidence="1">Belongs to the xylose isomerase family.</text>
</comment>
<accession>A9MUV0</accession>
<sequence>MQAYFDQLDRVRYEGPQSTNPLAFRHYNPDELVLGKRMEDHLRFAACYWHTFCWNGADMFGVGAFNRPWQQPGEALELAKRKADVAFEFLHKLNVPFYCFHDVDVSPEGASLKEYKNNFAQMVDVLAAKQEQSGVKLLWGTANCFTNPRYGAGAATNPDPEVFSWAATQVVTAMNATHKLGGENYVLWGGREGYETLLNTDLRQEREQIGRFMQMVVEHKHKMGFQGTLLIEPKPQEPTKHQYDYDVATVYGFLKQFGLEKEIKVNIEANHATLAGHSFHHEIATAIALGIFGSVDANRGDAQLGWDTDQFPISVEENALVMYEILKAGGFTTGGLNFDAKVRRQSTDKYDLFYGHIGAMDTMALSLKIAARMVEDGELDKRVAKRYAGWNGELGQQILKGQLSLGELAQYAEQHNLAPVHQSGHQELLENLVNRYLFDK</sequence>
<organism>
    <name type="scientific">Salmonella paratyphi B (strain ATCC BAA-1250 / SPB7)</name>
    <dbReference type="NCBI Taxonomy" id="1016998"/>
    <lineage>
        <taxon>Bacteria</taxon>
        <taxon>Pseudomonadati</taxon>
        <taxon>Pseudomonadota</taxon>
        <taxon>Gammaproteobacteria</taxon>
        <taxon>Enterobacterales</taxon>
        <taxon>Enterobacteriaceae</taxon>
        <taxon>Salmonella</taxon>
    </lineage>
</organism>
<keyword id="KW-0119">Carbohydrate metabolism</keyword>
<keyword id="KW-0963">Cytoplasm</keyword>
<keyword id="KW-0413">Isomerase</keyword>
<keyword id="KW-0460">Magnesium</keyword>
<keyword id="KW-0479">Metal-binding</keyword>
<keyword id="KW-0859">Xylose metabolism</keyword>
<proteinExistence type="inferred from homology"/>
<evidence type="ECO:0000255" key="1">
    <source>
        <dbReference type="HAMAP-Rule" id="MF_00455"/>
    </source>
</evidence>
<dbReference type="EC" id="5.3.1.5" evidence="1"/>
<dbReference type="EMBL" id="CP000886">
    <property type="protein sequence ID" value="ABX69860.1"/>
    <property type="molecule type" value="Genomic_DNA"/>
</dbReference>
<dbReference type="RefSeq" id="WP_001149569.1">
    <property type="nucleotide sequence ID" value="NC_010102.1"/>
</dbReference>
<dbReference type="SMR" id="A9MUV0"/>
<dbReference type="KEGG" id="spq:SPAB_04547"/>
<dbReference type="PATRIC" id="fig|1016998.12.peg.4277"/>
<dbReference type="HOGENOM" id="CLU_037261_1_0_6"/>
<dbReference type="BioCyc" id="SENT1016998:SPAB_RS18495-MONOMER"/>
<dbReference type="Proteomes" id="UP000008556">
    <property type="component" value="Chromosome"/>
</dbReference>
<dbReference type="GO" id="GO:0005737">
    <property type="term" value="C:cytoplasm"/>
    <property type="evidence" value="ECO:0007669"/>
    <property type="project" value="UniProtKB-SubCell"/>
</dbReference>
<dbReference type="GO" id="GO:0000287">
    <property type="term" value="F:magnesium ion binding"/>
    <property type="evidence" value="ECO:0007669"/>
    <property type="project" value="UniProtKB-UniRule"/>
</dbReference>
<dbReference type="GO" id="GO:0009045">
    <property type="term" value="F:xylose isomerase activity"/>
    <property type="evidence" value="ECO:0007669"/>
    <property type="project" value="UniProtKB-UniRule"/>
</dbReference>
<dbReference type="GO" id="GO:0042732">
    <property type="term" value="P:D-xylose metabolic process"/>
    <property type="evidence" value="ECO:0007669"/>
    <property type="project" value="UniProtKB-UniRule"/>
</dbReference>
<dbReference type="FunFam" id="3.20.20.150:FF:000002">
    <property type="entry name" value="Xylose isomerase"/>
    <property type="match status" value="1"/>
</dbReference>
<dbReference type="Gene3D" id="3.20.20.150">
    <property type="entry name" value="Divalent-metal-dependent TIM barrel enzymes"/>
    <property type="match status" value="1"/>
</dbReference>
<dbReference type="HAMAP" id="MF_00455">
    <property type="entry name" value="Xylose_isom_A"/>
    <property type="match status" value="1"/>
</dbReference>
<dbReference type="InterPro" id="IPR036237">
    <property type="entry name" value="Xyl_isomerase-like_sf"/>
</dbReference>
<dbReference type="InterPro" id="IPR013452">
    <property type="entry name" value="Xylose_isom_bac"/>
</dbReference>
<dbReference type="InterPro" id="IPR001998">
    <property type="entry name" value="Xylose_isomerase"/>
</dbReference>
<dbReference type="NCBIfam" id="NF003998">
    <property type="entry name" value="PRK05474.1"/>
    <property type="match status" value="1"/>
</dbReference>
<dbReference type="NCBIfam" id="TIGR02630">
    <property type="entry name" value="xylose_isom_A"/>
    <property type="match status" value="1"/>
</dbReference>
<dbReference type="PANTHER" id="PTHR48408">
    <property type="match status" value="1"/>
</dbReference>
<dbReference type="PANTHER" id="PTHR48408:SF1">
    <property type="entry name" value="XYLOSE ISOMERASE"/>
    <property type="match status" value="1"/>
</dbReference>
<dbReference type="PRINTS" id="PR00688">
    <property type="entry name" value="XYLOSISMRASE"/>
</dbReference>
<dbReference type="SUPFAM" id="SSF51658">
    <property type="entry name" value="Xylose isomerase-like"/>
    <property type="match status" value="1"/>
</dbReference>
<dbReference type="PROSITE" id="PS51415">
    <property type="entry name" value="XYLOSE_ISOMERASE"/>
    <property type="match status" value="1"/>
</dbReference>
<gene>
    <name evidence="1" type="primary">xylA</name>
    <name type="ordered locus">SPAB_04547</name>
</gene>